<keyword id="KW-0217">Developmental protein</keyword>
<keyword id="KW-0221">Differentiation</keyword>
<keyword id="KW-0325">Glycoprotein</keyword>
<keyword id="KW-0379">Hydroxylation</keyword>
<keyword id="KW-1185">Reference proteome</keyword>
<keyword id="KW-0964">Secreted</keyword>
<keyword id="KW-0732">Signal</keyword>
<reference key="1">
    <citation type="journal article" date="1997" name="DNA Res.">
        <title>Structural analysis of Arabidopsis thaliana chromosome 5. III. Sequence features of the regions of 1,191,918 bp covered by seventeen physically assigned P1 clones.</title>
        <authorList>
            <person name="Nakamura Y."/>
            <person name="Sato S."/>
            <person name="Kaneko T."/>
            <person name="Kotani H."/>
            <person name="Asamizu E."/>
            <person name="Miyajima N."/>
            <person name="Tabata S."/>
        </authorList>
    </citation>
    <scope>NUCLEOTIDE SEQUENCE [LARGE SCALE GENOMIC DNA]</scope>
    <source>
        <strain>cv. Columbia</strain>
    </source>
</reference>
<reference key="2">
    <citation type="journal article" date="2017" name="Plant J.">
        <title>Araport11: a complete reannotation of the Arabidopsis thaliana reference genome.</title>
        <authorList>
            <person name="Cheng C.Y."/>
            <person name="Krishnakumar V."/>
            <person name="Chan A.P."/>
            <person name="Thibaud-Nissen F."/>
            <person name="Schobel S."/>
            <person name="Town C.D."/>
        </authorList>
    </citation>
    <scope>GENOME REANNOTATION</scope>
    <source>
        <strain>cv. Columbia</strain>
    </source>
</reference>
<reference key="3">
    <citation type="journal article" date="2001" name="Plant Physiol.">
        <title>A large family of genes that share homology with CLAVATA3.</title>
        <authorList>
            <person name="Cock J.M."/>
            <person name="McCormick S."/>
        </authorList>
    </citation>
    <scope>GENE FAMILY</scope>
    <scope>NOMENCLATURE</scope>
</reference>
<reference key="4">
    <citation type="journal article" date="2003" name="Plant Mol. Biol.">
        <title>The Arabidopsis CLV3-like (CLE) genes are expressed in diverse tissues and encode secreted proteins.</title>
        <authorList>
            <person name="Sharma V.K."/>
            <person name="Ramirez J."/>
            <person name="Fletcher J.C."/>
        </authorList>
    </citation>
    <scope>TISSUE SPECIFICITY</scope>
</reference>
<reference key="5">
    <citation type="journal article" date="2006" name="Plant Physiol.">
        <title>Evidence for functional conservation, sufficiency, and proteolytic processing of the CLAVATA3 CLE domain.</title>
        <authorList>
            <person name="Ni J."/>
            <person name="Clark S.E."/>
        </authorList>
    </citation>
    <scope>FUNCTION</scope>
</reference>
<reference key="6">
    <citation type="journal article" date="2006" name="Plant Physiol.">
        <title>Gain-of-function phenotypes of many CLAVATA3/ESR genes, including four new family members, correlate with tandem variations in the conserved CLAVATA3/ESR domain.</title>
        <authorList>
            <person name="Strabala T.J."/>
            <person name="O'donnell P.J."/>
            <person name="Smit A.-M."/>
            <person name="Ampomah-Dwamena C."/>
            <person name="Martin E.J."/>
            <person name="Netzler N."/>
            <person name="Nieuwenhuizen N.J."/>
            <person name="Quinn B.D."/>
            <person name="Foote H.C.C."/>
            <person name="Hudson K.R."/>
        </authorList>
    </citation>
    <scope>GENE FAMILY</scope>
</reference>
<reference key="7">
    <citation type="journal article" date="2006" name="Science">
        <title>Dodeca-CLE peptides as suppressors of plant stem cell differentiation.</title>
        <authorList>
            <person name="Ito Y."/>
            <person name="Nakanomyo I."/>
            <person name="Motose H."/>
            <person name="Iwamoto K."/>
            <person name="Sawa S."/>
            <person name="Dohmae N."/>
            <person name="Fukuda H."/>
        </authorList>
    </citation>
    <scope>FUNCTION</scope>
</reference>
<reference key="8">
    <citation type="journal article" date="2008" name="Cell. Mol. Life Sci.">
        <title>The CLE family of plant polypeptide signaling molecules.</title>
        <authorList>
            <person name="Jun J.H."/>
            <person name="Fiume E."/>
            <person name="Fletcher J.C."/>
        </authorList>
    </citation>
    <scope>REVIEW</scope>
</reference>
<reference key="9">
    <citation type="journal article" date="2008" name="Curr. Opin. Plant Biol.">
        <title>Diverse and conserved roles of CLE peptides.</title>
        <authorList>
            <person name="Mitchum M.G."/>
            <person name="Wang X."/>
            <person name="Davis E.L."/>
        </authorList>
    </citation>
    <scope>REVIEW</scope>
</reference>
<reference key="10">
    <citation type="journal article" date="2010" name="Protoplasma">
        <title>CLE peptide signaling during plant development.</title>
        <authorList>
            <person name="Wang G."/>
            <person name="Fiers M."/>
        </authorList>
    </citation>
    <scope>REVIEW</scope>
</reference>
<accession>Q3E9I4</accession>
<name>CLE22_ARATH</name>
<comment type="function">
    <molecule>CLE22p</molecule>
    <text evidence="5 6">Extracellular signal peptide that regulates cell fate. Represses root apical meristem maintenance.</text>
</comment>
<comment type="subcellular location">
    <molecule>CLE22p</molecule>
    <subcellularLocation>
        <location evidence="1">Secreted</location>
        <location evidence="1">Extracellular space</location>
    </subcellularLocation>
</comment>
<comment type="tissue specificity">
    <molecule>CLE22p</molecule>
    <text evidence="4">Mostly expressed in stems and apex, and, to a lower extent, in seedlings, leaves, flowers and siliques.</text>
</comment>
<comment type="PTM">
    <molecule>CLE22p</molecule>
    <text evidence="1">The O-glycosylation (arabinosylation) of the hydroxyproline Pro-97 enhances binding affinity of the CLE22p peptide for its receptor.</text>
</comment>
<comment type="similarity">
    <text evidence="8">Belongs to the CLV3/ESR signal peptide family.</text>
</comment>
<gene>
    <name evidence="7" type="primary">CLE22</name>
    <name evidence="9" type="ordered locus">At5g12235</name>
    <name evidence="10" type="ORF">MXC9</name>
</gene>
<proteinExistence type="evidence at transcript level"/>
<sequence length="103" mass="11510">MGNYYSRRKSRKHITTVALIILLLLLFLFLYAKASSSSPNIHHHSTHGSLKKSGNLDPKLHDLDSNAASSRGSKYTNYEGGGEDVFEDGKRRVFTGPNPLHNR</sequence>
<dbReference type="EMBL" id="AB007727">
    <property type="status" value="NOT_ANNOTATED_CDS"/>
    <property type="molecule type" value="Genomic_DNA"/>
</dbReference>
<dbReference type="EMBL" id="CP002688">
    <property type="protein sequence ID" value="AED91779.1"/>
    <property type="molecule type" value="Genomic_DNA"/>
</dbReference>
<dbReference type="RefSeq" id="NP_680162.1">
    <property type="nucleotide sequence ID" value="NM_147857.2"/>
</dbReference>
<dbReference type="SMR" id="Q3E9I4"/>
<dbReference type="STRING" id="3702.Q3E9I4"/>
<dbReference type="GlyCosmos" id="Q3E9I4">
    <property type="glycosylation" value="1 site, No reported glycans"/>
</dbReference>
<dbReference type="PaxDb" id="3702-AT5G12235.1"/>
<dbReference type="EnsemblPlants" id="AT5G12235.1">
    <property type="protein sequence ID" value="AT5G12235.1"/>
    <property type="gene ID" value="AT5G12235"/>
</dbReference>
<dbReference type="GeneID" id="831098"/>
<dbReference type="Gramene" id="AT5G12235.1">
    <property type="protein sequence ID" value="AT5G12235.1"/>
    <property type="gene ID" value="AT5G12235"/>
</dbReference>
<dbReference type="KEGG" id="ath:AT5G12235"/>
<dbReference type="Araport" id="AT5G12235"/>
<dbReference type="TAIR" id="AT5G12235">
    <property type="gene designation" value="CLE22"/>
</dbReference>
<dbReference type="HOGENOM" id="CLU_162925_0_0_1"/>
<dbReference type="InParanoid" id="Q3E9I4"/>
<dbReference type="OMA" id="NIHHHST"/>
<dbReference type="PhylomeDB" id="Q3E9I4"/>
<dbReference type="PRO" id="PR:Q3E9I4"/>
<dbReference type="Proteomes" id="UP000006548">
    <property type="component" value="Chromosome 5"/>
</dbReference>
<dbReference type="ExpressionAtlas" id="Q3E9I4">
    <property type="expression patterns" value="baseline and differential"/>
</dbReference>
<dbReference type="GO" id="GO:0048046">
    <property type="term" value="C:apoplast"/>
    <property type="evidence" value="ECO:0000250"/>
    <property type="project" value="UniProtKB"/>
</dbReference>
<dbReference type="GO" id="GO:0033612">
    <property type="term" value="F:receptor serine/threonine kinase binding"/>
    <property type="evidence" value="ECO:0000353"/>
    <property type="project" value="UniProtKB"/>
</dbReference>
<dbReference type="GO" id="GO:0045168">
    <property type="term" value="P:cell-cell signaling involved in cell fate commitment"/>
    <property type="evidence" value="ECO:0000250"/>
    <property type="project" value="UniProtKB"/>
</dbReference>
<dbReference type="GO" id="GO:0010078">
    <property type="term" value="P:maintenance of root meristem identity"/>
    <property type="evidence" value="ECO:0000315"/>
    <property type="project" value="TAIR"/>
</dbReference>
<dbReference type="GO" id="GO:0010087">
    <property type="term" value="P:phloem or xylem histogenesis"/>
    <property type="evidence" value="ECO:0000315"/>
    <property type="project" value="TAIR"/>
</dbReference>
<dbReference type="GO" id="GO:0048364">
    <property type="term" value="P:root development"/>
    <property type="evidence" value="ECO:0000315"/>
    <property type="project" value="TAIR"/>
</dbReference>
<dbReference type="InterPro" id="IPR033249">
    <property type="entry name" value="CLE_plant"/>
</dbReference>
<dbReference type="PANTHER" id="PTHR34545">
    <property type="entry name" value="CLAVATA3/ESR (CLE)-RELATED PROTEIN 22"/>
    <property type="match status" value="1"/>
</dbReference>
<dbReference type="PANTHER" id="PTHR34545:SF1">
    <property type="entry name" value="CLAVATA3_ESR (CLE)-RELATED PROTEIN 22"/>
    <property type="match status" value="1"/>
</dbReference>
<protein>
    <recommendedName>
        <fullName evidence="7">CLAVATA3/ESR (CLE)-related protein 22</fullName>
    </recommendedName>
    <component>
        <recommendedName>
            <fullName evidence="7">CLE22p</fullName>
        </recommendedName>
    </component>
</protein>
<feature type="signal peptide" evidence="2">
    <location>
        <begin position="1"/>
        <end position="34"/>
    </location>
</feature>
<feature type="chain" id="PRO_0000401273" description="CLAVATA3/ESR (CLE)-related protein 22">
    <location>
        <begin position="35"/>
        <end position="103"/>
    </location>
</feature>
<feature type="peptide" id="PRO_0000401274" description="CLE22p" evidence="1">
    <location>
        <begin position="91"/>
        <end position="102"/>
    </location>
</feature>
<feature type="region of interest" description="Disordered" evidence="3">
    <location>
        <begin position="37"/>
        <end position="103"/>
    </location>
</feature>
<feature type="compositionally biased region" description="Basic residues" evidence="3">
    <location>
        <begin position="41"/>
        <end position="50"/>
    </location>
</feature>
<feature type="compositionally biased region" description="Polar residues" evidence="3">
    <location>
        <begin position="66"/>
        <end position="76"/>
    </location>
</feature>
<feature type="modified residue" description="Hydroxyproline" evidence="1">
    <location>
        <position position="97"/>
    </location>
</feature>
<feature type="glycosylation site" description="O-linked (Ara...) hydroxyproline" evidence="1">
    <location>
        <position position="97"/>
    </location>
</feature>
<organism>
    <name type="scientific">Arabidopsis thaliana</name>
    <name type="common">Mouse-ear cress</name>
    <dbReference type="NCBI Taxonomy" id="3702"/>
    <lineage>
        <taxon>Eukaryota</taxon>
        <taxon>Viridiplantae</taxon>
        <taxon>Streptophyta</taxon>
        <taxon>Embryophyta</taxon>
        <taxon>Tracheophyta</taxon>
        <taxon>Spermatophyta</taxon>
        <taxon>Magnoliopsida</taxon>
        <taxon>eudicotyledons</taxon>
        <taxon>Gunneridae</taxon>
        <taxon>Pentapetalae</taxon>
        <taxon>rosids</taxon>
        <taxon>malvids</taxon>
        <taxon>Brassicales</taxon>
        <taxon>Brassicaceae</taxon>
        <taxon>Camelineae</taxon>
        <taxon>Arabidopsis</taxon>
    </lineage>
</organism>
<evidence type="ECO:0000250" key="1">
    <source>
        <dbReference type="UniProtKB" id="O49519"/>
    </source>
</evidence>
<evidence type="ECO:0000255" key="2"/>
<evidence type="ECO:0000256" key="3">
    <source>
        <dbReference type="SAM" id="MobiDB-lite"/>
    </source>
</evidence>
<evidence type="ECO:0000269" key="4">
    <source>
    </source>
</evidence>
<evidence type="ECO:0000269" key="5">
    <source>
    </source>
</evidence>
<evidence type="ECO:0000269" key="6">
    <source>
    </source>
</evidence>
<evidence type="ECO:0000303" key="7">
    <source>
    </source>
</evidence>
<evidence type="ECO:0000305" key="8"/>
<evidence type="ECO:0000312" key="9">
    <source>
        <dbReference type="Araport" id="AT5G12235"/>
    </source>
</evidence>
<evidence type="ECO:0000312" key="10">
    <source>
        <dbReference type="EMBL" id="AB007727"/>
    </source>
</evidence>